<protein>
    <recommendedName>
        <fullName evidence="1">Glutamyl-tRNA(Gln) amidotransferase subunit A</fullName>
        <shortName evidence="1">Glu-ADT subunit A</shortName>
        <ecNumber evidence="1">6.3.5.7</ecNumber>
    </recommendedName>
</protein>
<dbReference type="EC" id="6.3.5.7" evidence="1"/>
<dbReference type="EMBL" id="CP000736">
    <property type="protein sequence ID" value="ABR52823.1"/>
    <property type="molecule type" value="Genomic_DNA"/>
</dbReference>
<dbReference type="SMR" id="A6U305"/>
<dbReference type="KEGG" id="sah:SaurJH1_1989"/>
<dbReference type="HOGENOM" id="CLU_009600_0_3_9"/>
<dbReference type="GO" id="GO:0030956">
    <property type="term" value="C:glutamyl-tRNA(Gln) amidotransferase complex"/>
    <property type="evidence" value="ECO:0007669"/>
    <property type="project" value="InterPro"/>
</dbReference>
<dbReference type="GO" id="GO:0005524">
    <property type="term" value="F:ATP binding"/>
    <property type="evidence" value="ECO:0007669"/>
    <property type="project" value="UniProtKB-KW"/>
</dbReference>
<dbReference type="GO" id="GO:0050567">
    <property type="term" value="F:glutaminyl-tRNA synthase (glutamine-hydrolyzing) activity"/>
    <property type="evidence" value="ECO:0007669"/>
    <property type="project" value="UniProtKB-UniRule"/>
</dbReference>
<dbReference type="GO" id="GO:0006412">
    <property type="term" value="P:translation"/>
    <property type="evidence" value="ECO:0007669"/>
    <property type="project" value="UniProtKB-UniRule"/>
</dbReference>
<dbReference type="Gene3D" id="3.90.1300.10">
    <property type="entry name" value="Amidase signature (AS) domain"/>
    <property type="match status" value="1"/>
</dbReference>
<dbReference type="HAMAP" id="MF_00120">
    <property type="entry name" value="GatA"/>
    <property type="match status" value="1"/>
</dbReference>
<dbReference type="InterPro" id="IPR000120">
    <property type="entry name" value="Amidase"/>
</dbReference>
<dbReference type="InterPro" id="IPR020556">
    <property type="entry name" value="Amidase_CS"/>
</dbReference>
<dbReference type="InterPro" id="IPR023631">
    <property type="entry name" value="Amidase_dom"/>
</dbReference>
<dbReference type="InterPro" id="IPR036928">
    <property type="entry name" value="AS_sf"/>
</dbReference>
<dbReference type="InterPro" id="IPR004412">
    <property type="entry name" value="GatA"/>
</dbReference>
<dbReference type="NCBIfam" id="TIGR00132">
    <property type="entry name" value="gatA"/>
    <property type="match status" value="1"/>
</dbReference>
<dbReference type="PANTHER" id="PTHR11895:SF151">
    <property type="entry name" value="GLUTAMYL-TRNA(GLN) AMIDOTRANSFERASE SUBUNIT A"/>
    <property type="match status" value="1"/>
</dbReference>
<dbReference type="PANTHER" id="PTHR11895">
    <property type="entry name" value="TRANSAMIDASE"/>
    <property type="match status" value="1"/>
</dbReference>
<dbReference type="Pfam" id="PF01425">
    <property type="entry name" value="Amidase"/>
    <property type="match status" value="1"/>
</dbReference>
<dbReference type="SUPFAM" id="SSF75304">
    <property type="entry name" value="Amidase signature (AS) enzymes"/>
    <property type="match status" value="1"/>
</dbReference>
<dbReference type="PROSITE" id="PS00571">
    <property type="entry name" value="AMIDASES"/>
    <property type="match status" value="1"/>
</dbReference>
<comment type="function">
    <text evidence="1">Allows the formation of correctly charged Gln-tRNA(Gln) through the transamidation of misacylated Glu-tRNA(Gln) in organisms which lack glutaminyl-tRNA synthetase. The reaction takes place in the presence of glutamine and ATP through an activated gamma-phospho-Glu-tRNA(Gln).</text>
</comment>
<comment type="catalytic activity">
    <reaction evidence="1">
        <text>L-glutamyl-tRNA(Gln) + L-glutamine + ATP + H2O = L-glutaminyl-tRNA(Gln) + L-glutamate + ADP + phosphate + H(+)</text>
        <dbReference type="Rhea" id="RHEA:17521"/>
        <dbReference type="Rhea" id="RHEA-COMP:9681"/>
        <dbReference type="Rhea" id="RHEA-COMP:9684"/>
        <dbReference type="ChEBI" id="CHEBI:15377"/>
        <dbReference type="ChEBI" id="CHEBI:15378"/>
        <dbReference type="ChEBI" id="CHEBI:29985"/>
        <dbReference type="ChEBI" id="CHEBI:30616"/>
        <dbReference type="ChEBI" id="CHEBI:43474"/>
        <dbReference type="ChEBI" id="CHEBI:58359"/>
        <dbReference type="ChEBI" id="CHEBI:78520"/>
        <dbReference type="ChEBI" id="CHEBI:78521"/>
        <dbReference type="ChEBI" id="CHEBI:456216"/>
        <dbReference type="EC" id="6.3.5.7"/>
    </reaction>
</comment>
<comment type="subunit">
    <text evidence="1">Heterotrimer of A, B and C subunits.</text>
</comment>
<comment type="similarity">
    <text evidence="1">Belongs to the amidase family. GatA subfamily.</text>
</comment>
<feature type="chain" id="PRO_1000076143" description="Glutamyl-tRNA(Gln) amidotransferase subunit A">
    <location>
        <begin position="1"/>
        <end position="485"/>
    </location>
</feature>
<feature type="active site" description="Charge relay system" evidence="1">
    <location>
        <position position="79"/>
    </location>
</feature>
<feature type="active site" description="Charge relay system" evidence="1">
    <location>
        <position position="154"/>
    </location>
</feature>
<feature type="active site" description="Acyl-ester intermediate" evidence="1">
    <location>
        <position position="178"/>
    </location>
</feature>
<gene>
    <name evidence="1" type="primary">gatA</name>
    <name type="ordered locus">SaurJH1_1989</name>
</gene>
<reference key="1">
    <citation type="submission" date="2007-06" db="EMBL/GenBank/DDBJ databases">
        <title>Complete sequence of chromosome of Staphylococcus aureus subsp. aureus JH1.</title>
        <authorList>
            <consortium name="US DOE Joint Genome Institute"/>
            <person name="Copeland A."/>
            <person name="Lucas S."/>
            <person name="Lapidus A."/>
            <person name="Barry K."/>
            <person name="Detter J.C."/>
            <person name="Glavina del Rio T."/>
            <person name="Hammon N."/>
            <person name="Israni S."/>
            <person name="Dalin E."/>
            <person name="Tice H."/>
            <person name="Pitluck S."/>
            <person name="Chain P."/>
            <person name="Malfatti S."/>
            <person name="Shin M."/>
            <person name="Vergez L."/>
            <person name="Schmutz J."/>
            <person name="Larimer F."/>
            <person name="Land M."/>
            <person name="Hauser L."/>
            <person name="Kyrpides N."/>
            <person name="Ivanova N."/>
            <person name="Tomasz A."/>
            <person name="Richardson P."/>
        </authorList>
    </citation>
    <scope>NUCLEOTIDE SEQUENCE [LARGE SCALE GENOMIC DNA]</scope>
    <source>
        <strain>JH1</strain>
    </source>
</reference>
<name>GATA_STAA2</name>
<keyword id="KW-0067">ATP-binding</keyword>
<keyword id="KW-0436">Ligase</keyword>
<keyword id="KW-0547">Nucleotide-binding</keyword>
<keyword id="KW-0648">Protein biosynthesis</keyword>
<sequence length="485" mass="52835">MSIRYESVENLLTLIKDKKIKPSDVVKDIYDAIEETDPTIKSFLALDKENAIKKAQELDELQAKDQMDGKLFGIPMGIKDNIITNGLETTCASKMLEGFVPIYESTVMEKLHKENAVLIGKLNMDEFAMGGSTETSYFKKTVNPFDHKAVPGGSSGGSAAAVAAGLVPFSLGSDTGGSIRQPAAYCGVVGMKPTYGRVSRFGLVAFASSLDQIGPLTRNVKDNAIVLEAISGADVNDSTSAPVDDVDFTSEIGKDIKGLKVALPKEYLGEGVADDVKEAVQNAVETLKSLGAVVEEVSLPNTKFGIPSYYVIASSEASSNLSRFDGIRYGYHSKEAHSLEELYKMSRSEGFGKEVKRRIFLGTFALSSGYYDAYYKKSQKVRTLIKNDFDKVFENYDVVVGPTAPTTAFNLGEEIDDPLTMYANDLLTTPVNLAGLPGISVPCGQSNGRPIGLQFIGKPFDEKTLYRVAYQYETQYNLHDVYEKL</sequence>
<organism>
    <name type="scientific">Staphylococcus aureus (strain JH1)</name>
    <dbReference type="NCBI Taxonomy" id="359787"/>
    <lineage>
        <taxon>Bacteria</taxon>
        <taxon>Bacillati</taxon>
        <taxon>Bacillota</taxon>
        <taxon>Bacilli</taxon>
        <taxon>Bacillales</taxon>
        <taxon>Staphylococcaceae</taxon>
        <taxon>Staphylococcus</taxon>
    </lineage>
</organism>
<proteinExistence type="inferred from homology"/>
<accession>A6U305</accession>
<evidence type="ECO:0000255" key="1">
    <source>
        <dbReference type="HAMAP-Rule" id="MF_00120"/>
    </source>
</evidence>